<feature type="chain" id="PRO_0000291217" description="Tetraacyldisaccharide 4'-kinase">
    <location>
        <begin position="1"/>
        <end position="335"/>
    </location>
</feature>
<feature type="binding site" evidence="1">
    <location>
        <begin position="51"/>
        <end position="58"/>
    </location>
    <ligand>
        <name>ATP</name>
        <dbReference type="ChEBI" id="CHEBI:30616"/>
    </ligand>
</feature>
<evidence type="ECO:0000255" key="1">
    <source>
        <dbReference type="HAMAP-Rule" id="MF_00409"/>
    </source>
</evidence>
<dbReference type="EC" id="2.7.1.130" evidence="1"/>
<dbReference type="EMBL" id="CP000319">
    <property type="protein sequence ID" value="ABE63912.1"/>
    <property type="molecule type" value="Genomic_DNA"/>
</dbReference>
<dbReference type="RefSeq" id="WP_011511568.1">
    <property type="nucleotide sequence ID" value="NC_007964.1"/>
</dbReference>
<dbReference type="SMR" id="Q1QIN5"/>
<dbReference type="STRING" id="323097.Nham_3177"/>
<dbReference type="KEGG" id="nha:Nham_3177"/>
<dbReference type="eggNOG" id="COG1663">
    <property type="taxonomic scope" value="Bacteria"/>
</dbReference>
<dbReference type="HOGENOM" id="CLU_038816_0_0_5"/>
<dbReference type="OrthoDB" id="9766423at2"/>
<dbReference type="UniPathway" id="UPA00359">
    <property type="reaction ID" value="UER00482"/>
</dbReference>
<dbReference type="Proteomes" id="UP000001953">
    <property type="component" value="Chromosome"/>
</dbReference>
<dbReference type="GO" id="GO:0005886">
    <property type="term" value="C:plasma membrane"/>
    <property type="evidence" value="ECO:0007669"/>
    <property type="project" value="TreeGrafter"/>
</dbReference>
<dbReference type="GO" id="GO:0005524">
    <property type="term" value="F:ATP binding"/>
    <property type="evidence" value="ECO:0007669"/>
    <property type="project" value="UniProtKB-UniRule"/>
</dbReference>
<dbReference type="GO" id="GO:0009029">
    <property type="term" value="F:tetraacyldisaccharide 4'-kinase activity"/>
    <property type="evidence" value="ECO:0007669"/>
    <property type="project" value="UniProtKB-UniRule"/>
</dbReference>
<dbReference type="GO" id="GO:0009245">
    <property type="term" value="P:lipid A biosynthetic process"/>
    <property type="evidence" value="ECO:0007669"/>
    <property type="project" value="UniProtKB-UniRule"/>
</dbReference>
<dbReference type="GO" id="GO:0009244">
    <property type="term" value="P:lipopolysaccharide core region biosynthetic process"/>
    <property type="evidence" value="ECO:0007669"/>
    <property type="project" value="TreeGrafter"/>
</dbReference>
<dbReference type="HAMAP" id="MF_00409">
    <property type="entry name" value="LpxK"/>
    <property type="match status" value="1"/>
</dbReference>
<dbReference type="InterPro" id="IPR003758">
    <property type="entry name" value="LpxK"/>
</dbReference>
<dbReference type="InterPro" id="IPR027417">
    <property type="entry name" value="P-loop_NTPase"/>
</dbReference>
<dbReference type="NCBIfam" id="TIGR00682">
    <property type="entry name" value="lpxK"/>
    <property type="match status" value="1"/>
</dbReference>
<dbReference type="PANTHER" id="PTHR42724">
    <property type="entry name" value="TETRAACYLDISACCHARIDE 4'-KINASE"/>
    <property type="match status" value="1"/>
</dbReference>
<dbReference type="PANTHER" id="PTHR42724:SF1">
    <property type="entry name" value="TETRAACYLDISACCHARIDE 4'-KINASE, MITOCHONDRIAL-RELATED"/>
    <property type="match status" value="1"/>
</dbReference>
<dbReference type="Pfam" id="PF02606">
    <property type="entry name" value="LpxK"/>
    <property type="match status" value="1"/>
</dbReference>
<dbReference type="SUPFAM" id="SSF52540">
    <property type="entry name" value="P-loop containing nucleoside triphosphate hydrolases"/>
    <property type="match status" value="1"/>
</dbReference>
<protein>
    <recommendedName>
        <fullName evidence="1">Tetraacyldisaccharide 4'-kinase</fullName>
        <ecNumber evidence="1">2.7.1.130</ecNumber>
    </recommendedName>
    <alternativeName>
        <fullName evidence="1">Lipid A 4'-kinase</fullName>
    </alternativeName>
</protein>
<reference key="1">
    <citation type="submission" date="2006-03" db="EMBL/GenBank/DDBJ databases">
        <title>Complete sequence of chromosome of Nitrobacter hamburgensis X14.</title>
        <authorList>
            <consortium name="US DOE Joint Genome Institute"/>
            <person name="Copeland A."/>
            <person name="Lucas S."/>
            <person name="Lapidus A."/>
            <person name="Barry K."/>
            <person name="Detter J.C."/>
            <person name="Glavina del Rio T."/>
            <person name="Hammon N."/>
            <person name="Israni S."/>
            <person name="Dalin E."/>
            <person name="Tice H."/>
            <person name="Pitluck S."/>
            <person name="Chain P."/>
            <person name="Malfatti S."/>
            <person name="Shin M."/>
            <person name="Vergez L."/>
            <person name="Schmutz J."/>
            <person name="Larimer F."/>
            <person name="Land M."/>
            <person name="Hauser L."/>
            <person name="Kyrpides N."/>
            <person name="Ivanova N."/>
            <person name="Ward B."/>
            <person name="Arp D."/>
            <person name="Klotz M."/>
            <person name="Stein L."/>
            <person name="O'Mullan G."/>
            <person name="Starkenburg S."/>
            <person name="Sayavedra L."/>
            <person name="Poret-Peterson A.T."/>
            <person name="Gentry M.E."/>
            <person name="Bruce D."/>
            <person name="Richardson P."/>
        </authorList>
    </citation>
    <scope>NUCLEOTIDE SEQUENCE [LARGE SCALE GENOMIC DNA]</scope>
    <source>
        <strain>DSM 10229 / NCIMB 13809 / X14</strain>
    </source>
</reference>
<comment type="function">
    <text evidence="1">Transfers the gamma-phosphate of ATP to the 4'-position of a tetraacyldisaccharide 1-phosphate intermediate (termed DS-1-P) to form tetraacyldisaccharide 1,4'-bis-phosphate (lipid IVA).</text>
</comment>
<comment type="catalytic activity">
    <reaction evidence="1">
        <text>a lipid A disaccharide + ATP = a lipid IVA + ADP + H(+)</text>
        <dbReference type="Rhea" id="RHEA:67840"/>
        <dbReference type="ChEBI" id="CHEBI:15378"/>
        <dbReference type="ChEBI" id="CHEBI:30616"/>
        <dbReference type="ChEBI" id="CHEBI:176343"/>
        <dbReference type="ChEBI" id="CHEBI:176425"/>
        <dbReference type="ChEBI" id="CHEBI:456216"/>
        <dbReference type="EC" id="2.7.1.130"/>
    </reaction>
</comment>
<comment type="pathway">
    <text evidence="1">Glycolipid biosynthesis; lipid IV(A) biosynthesis; lipid IV(A) from (3R)-3-hydroxytetradecanoyl-[acyl-carrier-protein] and UDP-N-acetyl-alpha-D-glucosamine: step 6/6.</text>
</comment>
<comment type="similarity">
    <text evidence="1">Belongs to the LpxK family.</text>
</comment>
<sequence length="335" mass="35518">MHEPAFWHRPSSLLSRLLMPVGALYGAVAARRLMRTGMRAGVPVICVGNYHVGGAGKTPTVIALAGILRSLGETPVVLSRGYGGRLHGPVHVDPHRHTAADVGDEPLMMAWTIPVIVSRQRAAGIAPARALGASVILMDDGFQNPALAKDISLIVIDRARGLGNGQVFPAGPLRAPLPPQLARTDALVIVGFGPAADDVAASIGARGGLVLPARLIPDDASVVALRGRRVYAFAGIGDPQRFFRSLRACGIDVAAERAFPDHHPFSQRDVADLQTAAERDGLTLVTTEKDLARLRNSEDLAAFAQAVVAFAVTLAFDDEAVLRSFLTDRIGRARR</sequence>
<proteinExistence type="inferred from homology"/>
<organism>
    <name type="scientific">Nitrobacter hamburgensis (strain DSM 10229 / NCIMB 13809 / X14)</name>
    <dbReference type="NCBI Taxonomy" id="323097"/>
    <lineage>
        <taxon>Bacteria</taxon>
        <taxon>Pseudomonadati</taxon>
        <taxon>Pseudomonadota</taxon>
        <taxon>Alphaproteobacteria</taxon>
        <taxon>Hyphomicrobiales</taxon>
        <taxon>Nitrobacteraceae</taxon>
        <taxon>Nitrobacter</taxon>
    </lineage>
</organism>
<keyword id="KW-0067">ATP-binding</keyword>
<keyword id="KW-0418">Kinase</keyword>
<keyword id="KW-0441">Lipid A biosynthesis</keyword>
<keyword id="KW-0444">Lipid biosynthesis</keyword>
<keyword id="KW-0443">Lipid metabolism</keyword>
<keyword id="KW-0547">Nucleotide-binding</keyword>
<keyword id="KW-1185">Reference proteome</keyword>
<keyword id="KW-0808">Transferase</keyword>
<gene>
    <name evidence="1" type="primary">lpxK</name>
    <name type="ordered locus">Nham_3177</name>
</gene>
<accession>Q1QIN5</accession>
<name>LPXK_NITHX</name>